<gene>
    <name type="ordered locus">RD1_1686</name>
</gene>
<dbReference type="EC" id="3.6.1.9" evidence="1"/>
<dbReference type="EMBL" id="CP000362">
    <property type="protein sequence ID" value="ABG31310.1"/>
    <property type="molecule type" value="Genomic_DNA"/>
</dbReference>
<dbReference type="RefSeq" id="WP_011567929.1">
    <property type="nucleotide sequence ID" value="NC_008209.1"/>
</dbReference>
<dbReference type="SMR" id="Q169N3"/>
<dbReference type="STRING" id="375451.RD1_1686"/>
<dbReference type="KEGG" id="rde:RD1_1686"/>
<dbReference type="eggNOG" id="COG0424">
    <property type="taxonomic scope" value="Bacteria"/>
</dbReference>
<dbReference type="HOGENOM" id="CLU_040416_2_0_5"/>
<dbReference type="OrthoDB" id="9807767at2"/>
<dbReference type="Proteomes" id="UP000007029">
    <property type="component" value="Chromosome"/>
</dbReference>
<dbReference type="GO" id="GO:0005737">
    <property type="term" value="C:cytoplasm"/>
    <property type="evidence" value="ECO:0007669"/>
    <property type="project" value="UniProtKB-SubCell"/>
</dbReference>
<dbReference type="GO" id="GO:0036218">
    <property type="term" value="F:dTTP diphosphatase activity"/>
    <property type="evidence" value="ECO:0007669"/>
    <property type="project" value="RHEA"/>
</dbReference>
<dbReference type="GO" id="GO:0036221">
    <property type="term" value="F:UTP diphosphatase activity"/>
    <property type="evidence" value="ECO:0007669"/>
    <property type="project" value="RHEA"/>
</dbReference>
<dbReference type="GO" id="GO:0009117">
    <property type="term" value="P:nucleotide metabolic process"/>
    <property type="evidence" value="ECO:0007669"/>
    <property type="project" value="UniProtKB-KW"/>
</dbReference>
<dbReference type="CDD" id="cd00555">
    <property type="entry name" value="Maf"/>
    <property type="match status" value="1"/>
</dbReference>
<dbReference type="Gene3D" id="3.90.950.10">
    <property type="match status" value="1"/>
</dbReference>
<dbReference type="HAMAP" id="MF_00528">
    <property type="entry name" value="Maf"/>
    <property type="match status" value="1"/>
</dbReference>
<dbReference type="InterPro" id="IPR029001">
    <property type="entry name" value="ITPase-like_fam"/>
</dbReference>
<dbReference type="InterPro" id="IPR003697">
    <property type="entry name" value="Maf-like"/>
</dbReference>
<dbReference type="NCBIfam" id="TIGR00172">
    <property type="entry name" value="maf"/>
    <property type="match status" value="1"/>
</dbReference>
<dbReference type="PANTHER" id="PTHR43213">
    <property type="entry name" value="BIFUNCTIONAL DTTP/UTP PYROPHOSPHATASE/METHYLTRANSFERASE PROTEIN-RELATED"/>
    <property type="match status" value="1"/>
</dbReference>
<dbReference type="PANTHER" id="PTHR43213:SF5">
    <property type="entry name" value="BIFUNCTIONAL DTTP_UTP PYROPHOSPHATASE_METHYLTRANSFERASE PROTEIN-RELATED"/>
    <property type="match status" value="1"/>
</dbReference>
<dbReference type="Pfam" id="PF02545">
    <property type="entry name" value="Maf"/>
    <property type="match status" value="1"/>
</dbReference>
<dbReference type="PIRSF" id="PIRSF006305">
    <property type="entry name" value="Maf"/>
    <property type="match status" value="1"/>
</dbReference>
<dbReference type="SUPFAM" id="SSF52972">
    <property type="entry name" value="ITPase-like"/>
    <property type="match status" value="1"/>
</dbReference>
<sequence>MFILGSGSPRRKELLAQIGVVPDDIRPPDINETPLKGELPRPYCARMAREKACAVDALPDDVVLCADTTVALGRRILGKPEDATEAAAFLKLLSGRRHRVITAIAVRVAERVWEKDVVSIVRMKSLSQAEIQSYIDSEDWRGKAGGYGIQGPAAALIPWISGSYTGIVGLPLAETAGLLQAAGYRGAS</sequence>
<reference key="1">
    <citation type="journal article" date="2007" name="J. Bacteriol.">
        <title>The complete genome sequence of Roseobacter denitrificans reveals a mixotrophic rather than photosynthetic metabolism.</title>
        <authorList>
            <person name="Swingley W.D."/>
            <person name="Sadekar S."/>
            <person name="Mastrian S.D."/>
            <person name="Matthies H.J."/>
            <person name="Hao J."/>
            <person name="Ramos H."/>
            <person name="Acharya C.R."/>
            <person name="Conrad A.L."/>
            <person name="Taylor H.L."/>
            <person name="Dejesa L.C."/>
            <person name="Shah M.K."/>
            <person name="O'Huallachain M.E."/>
            <person name="Lince M.T."/>
            <person name="Blankenship R.E."/>
            <person name="Beatty J.T."/>
            <person name="Touchman J.W."/>
        </authorList>
    </citation>
    <scope>NUCLEOTIDE SEQUENCE [LARGE SCALE GENOMIC DNA]</scope>
    <source>
        <strain>ATCC 33942 / OCh 114</strain>
    </source>
</reference>
<accession>Q169N3</accession>
<comment type="function">
    <text evidence="1">Nucleoside triphosphate pyrophosphatase that hydrolyzes dTTP and UTP. May have a dual role in cell division arrest and in preventing the incorporation of modified nucleotides into cellular nucleic acids.</text>
</comment>
<comment type="catalytic activity">
    <reaction evidence="1">
        <text>dTTP + H2O = dTMP + diphosphate + H(+)</text>
        <dbReference type="Rhea" id="RHEA:28534"/>
        <dbReference type="ChEBI" id="CHEBI:15377"/>
        <dbReference type="ChEBI" id="CHEBI:15378"/>
        <dbReference type="ChEBI" id="CHEBI:33019"/>
        <dbReference type="ChEBI" id="CHEBI:37568"/>
        <dbReference type="ChEBI" id="CHEBI:63528"/>
        <dbReference type="EC" id="3.6.1.9"/>
    </reaction>
</comment>
<comment type="catalytic activity">
    <reaction evidence="1">
        <text>UTP + H2O = UMP + diphosphate + H(+)</text>
        <dbReference type="Rhea" id="RHEA:29395"/>
        <dbReference type="ChEBI" id="CHEBI:15377"/>
        <dbReference type="ChEBI" id="CHEBI:15378"/>
        <dbReference type="ChEBI" id="CHEBI:33019"/>
        <dbReference type="ChEBI" id="CHEBI:46398"/>
        <dbReference type="ChEBI" id="CHEBI:57865"/>
        <dbReference type="EC" id="3.6.1.9"/>
    </reaction>
</comment>
<comment type="cofactor">
    <cofactor evidence="1">
        <name>a divalent metal cation</name>
        <dbReference type="ChEBI" id="CHEBI:60240"/>
    </cofactor>
</comment>
<comment type="subcellular location">
    <subcellularLocation>
        <location evidence="1">Cytoplasm</location>
    </subcellularLocation>
</comment>
<comment type="similarity">
    <text evidence="1">Belongs to the Maf family. YhdE subfamily.</text>
</comment>
<name>NTPPA_ROSDO</name>
<proteinExistence type="inferred from homology"/>
<feature type="chain" id="PRO_0000267414" description="dTTP/UTP pyrophosphatase">
    <location>
        <begin position="1"/>
        <end position="188"/>
    </location>
</feature>
<feature type="active site" description="Proton acceptor" evidence="1">
    <location>
        <position position="67"/>
    </location>
</feature>
<feature type="site" description="Important for substrate specificity" evidence="1">
    <location>
        <position position="10"/>
    </location>
</feature>
<feature type="site" description="Important for substrate specificity" evidence="1">
    <location>
        <position position="68"/>
    </location>
</feature>
<feature type="site" description="Important for substrate specificity" evidence="1">
    <location>
        <position position="150"/>
    </location>
</feature>
<keyword id="KW-0963">Cytoplasm</keyword>
<keyword id="KW-0378">Hydrolase</keyword>
<keyword id="KW-0546">Nucleotide metabolism</keyword>
<keyword id="KW-1185">Reference proteome</keyword>
<organism>
    <name type="scientific">Roseobacter denitrificans (strain ATCC 33942 / OCh 114)</name>
    <name type="common">Erythrobacter sp. (strain OCh 114)</name>
    <name type="synonym">Roseobacter denitrificans</name>
    <dbReference type="NCBI Taxonomy" id="375451"/>
    <lineage>
        <taxon>Bacteria</taxon>
        <taxon>Pseudomonadati</taxon>
        <taxon>Pseudomonadota</taxon>
        <taxon>Alphaproteobacteria</taxon>
        <taxon>Rhodobacterales</taxon>
        <taxon>Roseobacteraceae</taxon>
        <taxon>Roseobacter</taxon>
    </lineage>
</organism>
<protein>
    <recommendedName>
        <fullName evidence="1">dTTP/UTP pyrophosphatase</fullName>
        <shortName evidence="1">dTTPase/UTPase</shortName>
        <ecNumber evidence="1">3.6.1.9</ecNumber>
    </recommendedName>
    <alternativeName>
        <fullName evidence="1">Nucleoside triphosphate pyrophosphatase</fullName>
    </alternativeName>
    <alternativeName>
        <fullName evidence="1">Nucleotide pyrophosphatase</fullName>
        <shortName evidence="1">Nucleotide PPase</shortName>
    </alternativeName>
</protein>
<evidence type="ECO:0000255" key="1">
    <source>
        <dbReference type="HAMAP-Rule" id="MF_00528"/>
    </source>
</evidence>